<keyword id="KW-0067">ATP-binding</keyword>
<keyword id="KW-0520">NAD</keyword>
<keyword id="KW-0547">Nucleotide-binding</keyword>
<keyword id="KW-0548">Nucleotidyltransferase</keyword>
<keyword id="KW-0662">Pyridine nucleotide biosynthesis</keyword>
<keyword id="KW-1185">Reference proteome</keyword>
<keyword id="KW-0808">Transferase</keyword>
<gene>
    <name evidence="1" type="primary">nadD</name>
    <name type="ordered locus">CHY_0388</name>
</gene>
<comment type="function">
    <text evidence="1">Catalyzes the reversible adenylation of nicotinate mononucleotide (NaMN) to nicotinic acid adenine dinucleotide (NaAD).</text>
</comment>
<comment type="catalytic activity">
    <reaction evidence="1">
        <text>nicotinate beta-D-ribonucleotide + ATP + H(+) = deamido-NAD(+) + diphosphate</text>
        <dbReference type="Rhea" id="RHEA:22860"/>
        <dbReference type="ChEBI" id="CHEBI:15378"/>
        <dbReference type="ChEBI" id="CHEBI:30616"/>
        <dbReference type="ChEBI" id="CHEBI:33019"/>
        <dbReference type="ChEBI" id="CHEBI:57502"/>
        <dbReference type="ChEBI" id="CHEBI:58437"/>
        <dbReference type="EC" id="2.7.7.18"/>
    </reaction>
</comment>
<comment type="pathway">
    <text evidence="1">Cofactor biosynthesis; NAD(+) biosynthesis; deamido-NAD(+) from nicotinate D-ribonucleotide: step 1/1.</text>
</comment>
<comment type="similarity">
    <text evidence="1">Belongs to the NadD family.</text>
</comment>
<reference key="1">
    <citation type="journal article" date="2005" name="PLoS Genet.">
        <title>Life in hot carbon monoxide: the complete genome sequence of Carboxydothermus hydrogenoformans Z-2901.</title>
        <authorList>
            <person name="Wu M."/>
            <person name="Ren Q."/>
            <person name="Durkin A.S."/>
            <person name="Daugherty S.C."/>
            <person name="Brinkac L.M."/>
            <person name="Dodson R.J."/>
            <person name="Madupu R."/>
            <person name="Sullivan S.A."/>
            <person name="Kolonay J.F."/>
            <person name="Nelson W.C."/>
            <person name="Tallon L.J."/>
            <person name="Jones K.M."/>
            <person name="Ulrich L.E."/>
            <person name="Gonzalez J.M."/>
            <person name="Zhulin I.B."/>
            <person name="Robb F.T."/>
            <person name="Eisen J.A."/>
        </authorList>
    </citation>
    <scope>NUCLEOTIDE SEQUENCE [LARGE SCALE GENOMIC DNA]</scope>
    <source>
        <strain>ATCC BAA-161 / DSM 6008 / Z-2901</strain>
    </source>
</reference>
<proteinExistence type="inferred from homology"/>
<protein>
    <recommendedName>
        <fullName evidence="1">Probable nicotinate-nucleotide adenylyltransferase</fullName>
        <ecNumber evidence="1">2.7.7.18</ecNumber>
    </recommendedName>
    <alternativeName>
        <fullName evidence="1">Deamido-NAD(+) diphosphorylase</fullName>
    </alternativeName>
    <alternativeName>
        <fullName evidence="1">Deamido-NAD(+) pyrophosphorylase</fullName>
    </alternativeName>
    <alternativeName>
        <fullName evidence="1">Nicotinate mononucleotide adenylyltransferase</fullName>
        <shortName evidence="1">NaMN adenylyltransferase</shortName>
    </alternativeName>
</protein>
<evidence type="ECO:0000255" key="1">
    <source>
        <dbReference type="HAMAP-Rule" id="MF_00244"/>
    </source>
</evidence>
<feature type="chain" id="PRO_0000310104" description="Probable nicotinate-nucleotide adenylyltransferase">
    <location>
        <begin position="1"/>
        <end position="201"/>
    </location>
</feature>
<organism>
    <name type="scientific">Carboxydothermus hydrogenoformans (strain ATCC BAA-161 / DSM 6008 / Z-2901)</name>
    <dbReference type="NCBI Taxonomy" id="246194"/>
    <lineage>
        <taxon>Bacteria</taxon>
        <taxon>Bacillati</taxon>
        <taxon>Bacillota</taxon>
        <taxon>Clostridia</taxon>
        <taxon>Thermoanaerobacterales</taxon>
        <taxon>Thermoanaerobacteraceae</taxon>
        <taxon>Carboxydothermus</taxon>
    </lineage>
</organism>
<sequence length="201" mass="23215">MAGAKIGIFGGSFNPVHLGHLVLAREAFWQAKLNQVIFIPAKIPPHKKEGVISEQHRFQMLRLALKKYPEFSVSNIEFLRDKPSYTFDTVEELKLLYPHDELYFITGADGLLEITGWYRGEELLKKIPIIAVSRAGVSKEVFLNQVQYLKNRYRAQIIVVEMPEIGISSSLIRQRIREKLPYSHLIPVEVYDYIVANNLYR</sequence>
<accession>Q3AF34</accession>
<name>NADD_CARHZ</name>
<dbReference type="EC" id="2.7.7.18" evidence="1"/>
<dbReference type="EMBL" id="CP000141">
    <property type="protein sequence ID" value="ABB14490.1"/>
    <property type="molecule type" value="Genomic_DNA"/>
</dbReference>
<dbReference type="RefSeq" id="WP_011343326.1">
    <property type="nucleotide sequence ID" value="NC_007503.1"/>
</dbReference>
<dbReference type="SMR" id="Q3AF34"/>
<dbReference type="FunCoup" id="Q3AF34">
    <property type="interactions" value="373"/>
</dbReference>
<dbReference type="STRING" id="246194.CHY_0388"/>
<dbReference type="KEGG" id="chy:CHY_0388"/>
<dbReference type="eggNOG" id="COG1057">
    <property type="taxonomic scope" value="Bacteria"/>
</dbReference>
<dbReference type="HOGENOM" id="CLU_069765_3_1_9"/>
<dbReference type="InParanoid" id="Q3AF34"/>
<dbReference type="OrthoDB" id="5295945at2"/>
<dbReference type="UniPathway" id="UPA00253">
    <property type="reaction ID" value="UER00332"/>
</dbReference>
<dbReference type="Proteomes" id="UP000002706">
    <property type="component" value="Chromosome"/>
</dbReference>
<dbReference type="GO" id="GO:0005524">
    <property type="term" value="F:ATP binding"/>
    <property type="evidence" value="ECO:0007669"/>
    <property type="project" value="UniProtKB-KW"/>
</dbReference>
<dbReference type="GO" id="GO:0004515">
    <property type="term" value="F:nicotinate-nucleotide adenylyltransferase activity"/>
    <property type="evidence" value="ECO:0007669"/>
    <property type="project" value="UniProtKB-UniRule"/>
</dbReference>
<dbReference type="GO" id="GO:0009435">
    <property type="term" value="P:NAD biosynthetic process"/>
    <property type="evidence" value="ECO:0007669"/>
    <property type="project" value="UniProtKB-UniRule"/>
</dbReference>
<dbReference type="CDD" id="cd02165">
    <property type="entry name" value="NMNAT"/>
    <property type="match status" value="1"/>
</dbReference>
<dbReference type="Gene3D" id="3.40.50.620">
    <property type="entry name" value="HUPs"/>
    <property type="match status" value="1"/>
</dbReference>
<dbReference type="HAMAP" id="MF_00244">
    <property type="entry name" value="NaMN_adenylyltr"/>
    <property type="match status" value="1"/>
</dbReference>
<dbReference type="InterPro" id="IPR004821">
    <property type="entry name" value="Cyt_trans-like"/>
</dbReference>
<dbReference type="InterPro" id="IPR005248">
    <property type="entry name" value="NadD/NMNAT"/>
</dbReference>
<dbReference type="InterPro" id="IPR014729">
    <property type="entry name" value="Rossmann-like_a/b/a_fold"/>
</dbReference>
<dbReference type="NCBIfam" id="TIGR00125">
    <property type="entry name" value="cyt_tran_rel"/>
    <property type="match status" value="1"/>
</dbReference>
<dbReference type="NCBIfam" id="TIGR00482">
    <property type="entry name" value="nicotinate (nicotinamide) nucleotide adenylyltransferase"/>
    <property type="match status" value="1"/>
</dbReference>
<dbReference type="NCBIfam" id="NF000840">
    <property type="entry name" value="PRK00071.1-3"/>
    <property type="match status" value="1"/>
</dbReference>
<dbReference type="PANTHER" id="PTHR39321">
    <property type="entry name" value="NICOTINATE-NUCLEOTIDE ADENYLYLTRANSFERASE-RELATED"/>
    <property type="match status" value="1"/>
</dbReference>
<dbReference type="PANTHER" id="PTHR39321:SF3">
    <property type="entry name" value="PHOSPHOPANTETHEINE ADENYLYLTRANSFERASE"/>
    <property type="match status" value="1"/>
</dbReference>
<dbReference type="Pfam" id="PF01467">
    <property type="entry name" value="CTP_transf_like"/>
    <property type="match status" value="1"/>
</dbReference>
<dbReference type="SUPFAM" id="SSF52374">
    <property type="entry name" value="Nucleotidylyl transferase"/>
    <property type="match status" value="1"/>
</dbReference>